<sequence length="975" mass="104719">MSQTPSSLRDLEHHSAFVERHIGPNDAEIAQMLGVVGHDSLDAMTDAIVPSNIKSPAALALPDAITEEEALARIRAIASKNQVQRTFIGQGYYGTHTPKVILRNILENPAWYTAYTPYQAEISQGRMEALINFQTMCADLTGMQIANASLLDEATAAAEAMTLAKRSAKSKSDTFFVHDAVHPQTQELLRTRAEPLGIVLRVGTPDEAMQAECFGVLLQYPDSFGHIGDHAALADAVHAQGGLVAVATDLLALTLIAAPGEWGADIVVGNSQRFGVPFGFGGPHAAFMACRDAYKRSMPGRLIGVSIDAAGNPAYRLTLQTREQHIRREKATSNICTAQVLLAVMASMYAVYHGPEGLTRIARRTHRLAAILAAALRSAGVTVGEHFFDTLHVKAIDADAIHAKAHAAGINLRAIDSEAVGISLDETSTRADVVALAQLFGAQADIDALDAATADALPQGMRRTSAFLQHPVFNTHHSEHELLRYMRSLADKDLAMDRTMIPLGSCTMKLNATAEMIPVTWPEFGAIHPLAPPEQSAGYAQLIEELEAMLVECTGYDAVSLQPNSGAQGEYAGLLAIRAYHRSRNEAHRDICLIPESAHGTNPASAQMCGMTVVVTKCDANGNVDVDDIRAKAEKYSDRLAALMITYPSTHGVFEEDVVAICEAVHAHGGQVYTDGANMNALVGVAKPGKWGSDVSHLNLHKTFCIPHGGGGPGVGPCAVKSHLAPFLPKTLPNAGIRAGENQKAAIHGSGSNFGEGEVGMVSAASYGSASILPISWMYVTMMGSAGLRKATQVALLNANYIAKRLSAHYKTLYTGRNGLVAHECILDVRPLEKTSGIGAEDIAKRLIDFGFHAPTLSFPVAGTLMVEPTESESQHELDRFIDAMIQIREEIRAIEDGRLDREDNPLKHAPHTATQVSASEWTHAYPRELAAFPLPSLKQQKYWPPVGRVDNVYGDKNVMCACIPVDAYKDDVVA</sequence>
<proteinExistence type="inferred from homology"/>
<gene>
    <name evidence="1" type="primary">gcvP</name>
    <name type="ordered locus">XC_3135</name>
</gene>
<name>GCSP_XANC8</name>
<reference key="1">
    <citation type="journal article" date="2005" name="Genome Res.">
        <title>Comparative and functional genomic analyses of the pathogenicity of phytopathogen Xanthomonas campestris pv. campestris.</title>
        <authorList>
            <person name="Qian W."/>
            <person name="Jia Y."/>
            <person name="Ren S.-X."/>
            <person name="He Y.-Q."/>
            <person name="Feng J.-X."/>
            <person name="Lu L.-F."/>
            <person name="Sun Q."/>
            <person name="Ying G."/>
            <person name="Tang D.-J."/>
            <person name="Tang H."/>
            <person name="Wu W."/>
            <person name="Hao P."/>
            <person name="Wang L."/>
            <person name="Jiang B.-L."/>
            <person name="Zeng S."/>
            <person name="Gu W.-Y."/>
            <person name="Lu G."/>
            <person name="Rong L."/>
            <person name="Tian Y."/>
            <person name="Yao Z."/>
            <person name="Fu G."/>
            <person name="Chen B."/>
            <person name="Fang R."/>
            <person name="Qiang B."/>
            <person name="Chen Z."/>
            <person name="Zhao G.-P."/>
            <person name="Tang J.-L."/>
            <person name="He C."/>
        </authorList>
    </citation>
    <scope>NUCLEOTIDE SEQUENCE [LARGE SCALE GENOMIC DNA]</scope>
    <source>
        <strain>8004</strain>
    </source>
</reference>
<keyword id="KW-0560">Oxidoreductase</keyword>
<keyword id="KW-0663">Pyridoxal phosphate</keyword>
<accession>Q4URZ4</accession>
<comment type="function">
    <text evidence="1">The glycine cleavage system catalyzes the degradation of glycine. The P protein binds the alpha-amino group of glycine through its pyridoxal phosphate cofactor; CO(2) is released and the remaining methylamine moiety is then transferred to the lipoamide cofactor of the H protein.</text>
</comment>
<comment type="catalytic activity">
    <reaction evidence="1">
        <text>N(6)-[(R)-lipoyl]-L-lysyl-[glycine-cleavage complex H protein] + glycine + H(+) = N(6)-[(R)-S(8)-aminomethyldihydrolipoyl]-L-lysyl-[glycine-cleavage complex H protein] + CO2</text>
        <dbReference type="Rhea" id="RHEA:24304"/>
        <dbReference type="Rhea" id="RHEA-COMP:10494"/>
        <dbReference type="Rhea" id="RHEA-COMP:10495"/>
        <dbReference type="ChEBI" id="CHEBI:15378"/>
        <dbReference type="ChEBI" id="CHEBI:16526"/>
        <dbReference type="ChEBI" id="CHEBI:57305"/>
        <dbReference type="ChEBI" id="CHEBI:83099"/>
        <dbReference type="ChEBI" id="CHEBI:83143"/>
        <dbReference type="EC" id="1.4.4.2"/>
    </reaction>
</comment>
<comment type="cofactor">
    <cofactor evidence="1">
        <name>pyridoxal 5'-phosphate</name>
        <dbReference type="ChEBI" id="CHEBI:597326"/>
    </cofactor>
</comment>
<comment type="subunit">
    <text evidence="1">The glycine cleavage system is composed of four proteins: P, T, L and H.</text>
</comment>
<comment type="similarity">
    <text evidence="1">Belongs to the GcvP family.</text>
</comment>
<evidence type="ECO:0000255" key="1">
    <source>
        <dbReference type="HAMAP-Rule" id="MF_00711"/>
    </source>
</evidence>
<feature type="chain" id="PRO_1000045627" description="Glycine dehydrogenase (decarboxylating)">
    <location>
        <begin position="1"/>
        <end position="975"/>
    </location>
</feature>
<feature type="modified residue" description="N6-(pyridoxal phosphate)lysine" evidence="1">
    <location>
        <position position="702"/>
    </location>
</feature>
<protein>
    <recommendedName>
        <fullName evidence="1">Glycine dehydrogenase (decarboxylating)</fullName>
        <ecNumber evidence="1">1.4.4.2</ecNumber>
    </recommendedName>
    <alternativeName>
        <fullName evidence="1">Glycine cleavage system P-protein</fullName>
    </alternativeName>
    <alternativeName>
        <fullName evidence="1">Glycine decarboxylase</fullName>
    </alternativeName>
    <alternativeName>
        <fullName evidence="1">Glycine dehydrogenase (aminomethyl-transferring)</fullName>
    </alternativeName>
</protein>
<organism>
    <name type="scientific">Xanthomonas campestris pv. campestris (strain 8004)</name>
    <dbReference type="NCBI Taxonomy" id="314565"/>
    <lineage>
        <taxon>Bacteria</taxon>
        <taxon>Pseudomonadati</taxon>
        <taxon>Pseudomonadota</taxon>
        <taxon>Gammaproteobacteria</taxon>
        <taxon>Lysobacterales</taxon>
        <taxon>Lysobacteraceae</taxon>
        <taxon>Xanthomonas</taxon>
    </lineage>
</organism>
<dbReference type="EC" id="1.4.4.2" evidence="1"/>
<dbReference type="EMBL" id="CP000050">
    <property type="protein sequence ID" value="AAY50179.1"/>
    <property type="molecule type" value="Genomic_DNA"/>
</dbReference>
<dbReference type="RefSeq" id="WP_011036312.1">
    <property type="nucleotide sequence ID" value="NZ_CP155948.1"/>
</dbReference>
<dbReference type="SMR" id="Q4URZ4"/>
<dbReference type="KEGG" id="xcb:XC_3135"/>
<dbReference type="HOGENOM" id="CLU_004620_3_2_6"/>
<dbReference type="Proteomes" id="UP000000420">
    <property type="component" value="Chromosome"/>
</dbReference>
<dbReference type="GO" id="GO:0005829">
    <property type="term" value="C:cytosol"/>
    <property type="evidence" value="ECO:0007669"/>
    <property type="project" value="TreeGrafter"/>
</dbReference>
<dbReference type="GO" id="GO:0005960">
    <property type="term" value="C:glycine cleavage complex"/>
    <property type="evidence" value="ECO:0007669"/>
    <property type="project" value="TreeGrafter"/>
</dbReference>
<dbReference type="GO" id="GO:0016594">
    <property type="term" value="F:glycine binding"/>
    <property type="evidence" value="ECO:0007669"/>
    <property type="project" value="TreeGrafter"/>
</dbReference>
<dbReference type="GO" id="GO:0004375">
    <property type="term" value="F:glycine dehydrogenase (decarboxylating) activity"/>
    <property type="evidence" value="ECO:0007669"/>
    <property type="project" value="UniProtKB-EC"/>
</dbReference>
<dbReference type="GO" id="GO:0030170">
    <property type="term" value="F:pyridoxal phosphate binding"/>
    <property type="evidence" value="ECO:0007669"/>
    <property type="project" value="TreeGrafter"/>
</dbReference>
<dbReference type="GO" id="GO:0019464">
    <property type="term" value="P:glycine decarboxylation via glycine cleavage system"/>
    <property type="evidence" value="ECO:0007669"/>
    <property type="project" value="UniProtKB-UniRule"/>
</dbReference>
<dbReference type="CDD" id="cd00613">
    <property type="entry name" value="GDC-P"/>
    <property type="match status" value="2"/>
</dbReference>
<dbReference type="FunFam" id="3.40.640.10:FF:000005">
    <property type="entry name" value="Glycine dehydrogenase (decarboxylating), mitochondrial"/>
    <property type="match status" value="1"/>
</dbReference>
<dbReference type="FunFam" id="3.90.1150.10:FF:000007">
    <property type="entry name" value="Glycine dehydrogenase (decarboxylating), mitochondrial"/>
    <property type="match status" value="1"/>
</dbReference>
<dbReference type="FunFam" id="3.40.640.10:FF:000007">
    <property type="entry name" value="glycine dehydrogenase (Decarboxylating), mitochondrial"/>
    <property type="match status" value="1"/>
</dbReference>
<dbReference type="Gene3D" id="3.90.1150.10">
    <property type="entry name" value="Aspartate Aminotransferase, domain 1"/>
    <property type="match status" value="2"/>
</dbReference>
<dbReference type="Gene3D" id="3.40.640.10">
    <property type="entry name" value="Type I PLP-dependent aspartate aminotransferase-like (Major domain)"/>
    <property type="match status" value="2"/>
</dbReference>
<dbReference type="HAMAP" id="MF_00711">
    <property type="entry name" value="GcvP"/>
    <property type="match status" value="1"/>
</dbReference>
<dbReference type="InterPro" id="IPR003437">
    <property type="entry name" value="GcvP"/>
</dbReference>
<dbReference type="InterPro" id="IPR049316">
    <property type="entry name" value="GDC-P_C"/>
</dbReference>
<dbReference type="InterPro" id="IPR049315">
    <property type="entry name" value="GDC-P_N"/>
</dbReference>
<dbReference type="InterPro" id="IPR020581">
    <property type="entry name" value="GDC_P"/>
</dbReference>
<dbReference type="InterPro" id="IPR015424">
    <property type="entry name" value="PyrdxlP-dep_Trfase"/>
</dbReference>
<dbReference type="InterPro" id="IPR015421">
    <property type="entry name" value="PyrdxlP-dep_Trfase_major"/>
</dbReference>
<dbReference type="InterPro" id="IPR015422">
    <property type="entry name" value="PyrdxlP-dep_Trfase_small"/>
</dbReference>
<dbReference type="NCBIfam" id="TIGR00461">
    <property type="entry name" value="gcvP"/>
    <property type="match status" value="1"/>
</dbReference>
<dbReference type="NCBIfam" id="NF003346">
    <property type="entry name" value="PRK04366.1"/>
    <property type="match status" value="1"/>
</dbReference>
<dbReference type="PANTHER" id="PTHR11773:SF1">
    <property type="entry name" value="GLYCINE DEHYDROGENASE (DECARBOXYLATING), MITOCHONDRIAL"/>
    <property type="match status" value="1"/>
</dbReference>
<dbReference type="PANTHER" id="PTHR11773">
    <property type="entry name" value="GLYCINE DEHYDROGENASE, DECARBOXYLATING"/>
    <property type="match status" value="1"/>
</dbReference>
<dbReference type="Pfam" id="PF21478">
    <property type="entry name" value="GcvP2_C"/>
    <property type="match status" value="1"/>
</dbReference>
<dbReference type="Pfam" id="PF02347">
    <property type="entry name" value="GDC-P"/>
    <property type="match status" value="2"/>
</dbReference>
<dbReference type="SUPFAM" id="SSF53383">
    <property type="entry name" value="PLP-dependent transferases"/>
    <property type="match status" value="2"/>
</dbReference>